<comment type="function">
    <text evidence="1">One of the primary rRNA binding proteins, it binds directly to 16S rRNA where it helps nucleate assembly of the platform of the 30S subunit by binding and bridging several RNA helices of the 16S rRNA.</text>
</comment>
<comment type="function">
    <text evidence="1">Forms an intersubunit bridge (bridge B4) with the 23S rRNA of the 50S subunit in the ribosome.</text>
</comment>
<comment type="subunit">
    <text evidence="1">Part of the 30S ribosomal subunit. Forms a bridge to the 50S subunit in the 70S ribosome, contacting the 23S rRNA.</text>
</comment>
<comment type="similarity">
    <text evidence="1">Belongs to the universal ribosomal protein uS15 family.</text>
</comment>
<name>RS15_RUTMC</name>
<accession>A1AVW6</accession>
<feature type="chain" id="PRO_0000354214" description="Small ribosomal subunit protein uS15">
    <location>
        <begin position="1"/>
        <end position="86"/>
    </location>
</feature>
<dbReference type="EMBL" id="CP000488">
    <property type="protein sequence ID" value="ABL02073.1"/>
    <property type="molecule type" value="Genomic_DNA"/>
</dbReference>
<dbReference type="RefSeq" id="WP_011737698.1">
    <property type="nucleotide sequence ID" value="NC_008610.1"/>
</dbReference>
<dbReference type="SMR" id="A1AVW6"/>
<dbReference type="STRING" id="413404.Rmag_0293"/>
<dbReference type="KEGG" id="rma:Rmag_0293"/>
<dbReference type="eggNOG" id="COG0184">
    <property type="taxonomic scope" value="Bacteria"/>
</dbReference>
<dbReference type="HOGENOM" id="CLU_148518_1_0_6"/>
<dbReference type="OrthoDB" id="9799262at2"/>
<dbReference type="Proteomes" id="UP000002587">
    <property type="component" value="Chromosome"/>
</dbReference>
<dbReference type="GO" id="GO:0022627">
    <property type="term" value="C:cytosolic small ribosomal subunit"/>
    <property type="evidence" value="ECO:0007669"/>
    <property type="project" value="TreeGrafter"/>
</dbReference>
<dbReference type="GO" id="GO:0019843">
    <property type="term" value="F:rRNA binding"/>
    <property type="evidence" value="ECO:0007669"/>
    <property type="project" value="UniProtKB-UniRule"/>
</dbReference>
<dbReference type="GO" id="GO:0003735">
    <property type="term" value="F:structural constituent of ribosome"/>
    <property type="evidence" value="ECO:0007669"/>
    <property type="project" value="InterPro"/>
</dbReference>
<dbReference type="GO" id="GO:0006412">
    <property type="term" value="P:translation"/>
    <property type="evidence" value="ECO:0007669"/>
    <property type="project" value="UniProtKB-UniRule"/>
</dbReference>
<dbReference type="CDD" id="cd00353">
    <property type="entry name" value="Ribosomal_S15p_S13e"/>
    <property type="match status" value="1"/>
</dbReference>
<dbReference type="FunFam" id="1.10.287.10:FF:000002">
    <property type="entry name" value="30S ribosomal protein S15"/>
    <property type="match status" value="1"/>
</dbReference>
<dbReference type="Gene3D" id="6.10.250.3130">
    <property type="match status" value="1"/>
</dbReference>
<dbReference type="Gene3D" id="1.10.287.10">
    <property type="entry name" value="S15/NS1, RNA-binding"/>
    <property type="match status" value="1"/>
</dbReference>
<dbReference type="HAMAP" id="MF_01343_B">
    <property type="entry name" value="Ribosomal_uS15_B"/>
    <property type="match status" value="1"/>
</dbReference>
<dbReference type="InterPro" id="IPR000589">
    <property type="entry name" value="Ribosomal_uS15"/>
</dbReference>
<dbReference type="InterPro" id="IPR005290">
    <property type="entry name" value="Ribosomal_uS15_bac-type"/>
</dbReference>
<dbReference type="InterPro" id="IPR009068">
    <property type="entry name" value="uS15_NS1_RNA-bd_sf"/>
</dbReference>
<dbReference type="NCBIfam" id="TIGR00952">
    <property type="entry name" value="S15_bact"/>
    <property type="match status" value="1"/>
</dbReference>
<dbReference type="PANTHER" id="PTHR23321">
    <property type="entry name" value="RIBOSOMAL PROTEIN S15, BACTERIAL AND ORGANELLAR"/>
    <property type="match status" value="1"/>
</dbReference>
<dbReference type="PANTHER" id="PTHR23321:SF26">
    <property type="entry name" value="SMALL RIBOSOMAL SUBUNIT PROTEIN US15M"/>
    <property type="match status" value="1"/>
</dbReference>
<dbReference type="Pfam" id="PF00312">
    <property type="entry name" value="Ribosomal_S15"/>
    <property type="match status" value="1"/>
</dbReference>
<dbReference type="SMART" id="SM01387">
    <property type="entry name" value="Ribosomal_S15"/>
    <property type="match status" value="1"/>
</dbReference>
<dbReference type="SUPFAM" id="SSF47060">
    <property type="entry name" value="S15/NS1 RNA-binding domain"/>
    <property type="match status" value="1"/>
</dbReference>
<dbReference type="PROSITE" id="PS00362">
    <property type="entry name" value="RIBOSOMAL_S15"/>
    <property type="match status" value="1"/>
</dbReference>
<reference key="1">
    <citation type="journal article" date="2007" name="Science">
        <title>The Calyptogena magnifica chemoautotrophic symbiont genome.</title>
        <authorList>
            <person name="Newton I.L.G."/>
            <person name="Woyke T."/>
            <person name="Auchtung T.A."/>
            <person name="Dilly G.F."/>
            <person name="Dutton R.J."/>
            <person name="Fisher M.C."/>
            <person name="Fontanez K.M."/>
            <person name="Lau E."/>
            <person name="Stewart F.J."/>
            <person name="Richardson P.M."/>
            <person name="Barry K.W."/>
            <person name="Saunders E."/>
            <person name="Detter J.C."/>
            <person name="Wu D."/>
            <person name="Eisen J.A."/>
            <person name="Cavanaugh C.M."/>
        </authorList>
    </citation>
    <scope>NUCLEOTIDE SEQUENCE [LARGE SCALE GENOMIC DNA]</scope>
</reference>
<keyword id="KW-0687">Ribonucleoprotein</keyword>
<keyword id="KW-0689">Ribosomal protein</keyword>
<keyword id="KW-0694">RNA-binding</keyword>
<keyword id="KW-0699">rRNA-binding</keyword>
<sequence>MSIDTQAIIKKYQSKTGDTGSSNVQIALLTARIKHLTEHFKTHKKDHHSRRGLLHLVSQRKKLLIYLKDANTASYSNLIIHLGLRK</sequence>
<organism>
    <name type="scientific">Ruthia magnifica subsp. Calyptogena magnifica</name>
    <dbReference type="NCBI Taxonomy" id="413404"/>
    <lineage>
        <taxon>Bacteria</taxon>
        <taxon>Pseudomonadati</taxon>
        <taxon>Pseudomonadota</taxon>
        <taxon>Gammaproteobacteria</taxon>
        <taxon>Candidatus Pseudothioglobaceae</taxon>
        <taxon>Candidatus Ruthturnera</taxon>
    </lineage>
</organism>
<protein>
    <recommendedName>
        <fullName evidence="1">Small ribosomal subunit protein uS15</fullName>
    </recommendedName>
    <alternativeName>
        <fullName evidence="2">30S ribosomal protein S15</fullName>
    </alternativeName>
</protein>
<proteinExistence type="inferred from homology"/>
<gene>
    <name evidence="1" type="primary">rpsO</name>
    <name type="ordered locus">Rmag_0293</name>
</gene>
<evidence type="ECO:0000255" key="1">
    <source>
        <dbReference type="HAMAP-Rule" id="MF_01343"/>
    </source>
</evidence>
<evidence type="ECO:0000305" key="2"/>